<organism>
    <name type="scientific">Chroicoptera sp. (strain Windhoek)</name>
    <name type="common">Praying mantis</name>
    <dbReference type="NCBI Taxonomy" id="765340"/>
    <lineage>
        <taxon>Eukaryota</taxon>
        <taxon>Metazoa</taxon>
        <taxon>Ecdysozoa</taxon>
        <taxon>Arthropoda</taxon>
        <taxon>Hexapoda</taxon>
        <taxon>Insecta</taxon>
        <taxon>Pterygota</taxon>
        <taxon>Neoptera</taxon>
        <taxon>Polyneoptera</taxon>
        <taxon>Dictyoptera</taxon>
        <taxon>Mantodea</taxon>
        <taxon>Eumantodea</taxon>
        <taxon>Chroicopteroidea</taxon>
        <taxon>Chroicopteridae</taxon>
        <taxon>Chroicopterinae</taxon>
        <taxon>Chroicoptera</taxon>
    </lineage>
</organism>
<accession>P86649</accession>
<keyword id="KW-0027">Amidation</keyword>
<keyword id="KW-0903">Direct protein sequencing</keyword>
<keyword id="KW-0527">Neuropeptide</keyword>
<keyword id="KW-0964">Secreted</keyword>
<feature type="peptide" id="PRO_0000395582" description="Periviscerokinin-2" evidence="4">
    <location>
        <begin position="1"/>
        <end position="11"/>
    </location>
</feature>
<feature type="modified residue" description="Valine amide" evidence="4">
    <location>
        <position position="11"/>
    </location>
</feature>
<feature type="unsure residue" description="L or I" evidence="4">
    <location>
        <position position="5"/>
    </location>
</feature>
<feature type="unsure residue" description="I or L" evidence="4">
    <location>
        <position position="6"/>
    </location>
</feature>
<reference evidence="6" key="1">
    <citation type="journal article" date="2010" name="Peptides">
        <title>CAPA-peptides of praying mantids (Mantodea).</title>
        <authorList>
            <person name="Koehler R."/>
            <person name="Predel R."/>
        </authorList>
    </citation>
    <scope>PROTEIN SEQUENCE</scope>
    <scope>MASS SPECTROMETRY</scope>
    <scope>AMIDATION AT VAL-11</scope>
    <source>
        <tissue evidence="4">Abdominal perisympathetic organs</tissue>
    </source>
</reference>
<comment type="function">
    <text evidence="1">Mediates visceral muscle contractile activity (myotropic activity).</text>
</comment>
<comment type="subcellular location">
    <subcellularLocation>
        <location evidence="2">Secreted</location>
    </subcellularLocation>
</comment>
<comment type="mass spectrometry"/>
<comment type="similarity">
    <text evidence="3">Belongs to the periviscerokinin family.</text>
</comment>
<evidence type="ECO:0000250" key="1">
    <source>
        <dbReference type="UniProtKB" id="P83923"/>
    </source>
</evidence>
<evidence type="ECO:0000250" key="2">
    <source>
        <dbReference type="UniProtKB" id="P84375"/>
    </source>
</evidence>
<evidence type="ECO:0000255" key="3"/>
<evidence type="ECO:0000269" key="4">
    <source>
    </source>
</evidence>
<evidence type="ECO:0000303" key="5">
    <source>
    </source>
</evidence>
<evidence type="ECO:0000305" key="6"/>
<dbReference type="GO" id="GO:0005576">
    <property type="term" value="C:extracellular region"/>
    <property type="evidence" value="ECO:0007669"/>
    <property type="project" value="UniProtKB-SubCell"/>
</dbReference>
<dbReference type="GO" id="GO:0007218">
    <property type="term" value="P:neuropeptide signaling pathway"/>
    <property type="evidence" value="ECO:0007669"/>
    <property type="project" value="UniProtKB-KW"/>
</dbReference>
<dbReference type="InterPro" id="IPR013231">
    <property type="entry name" value="Periviscerokinin"/>
</dbReference>
<dbReference type="Pfam" id="PF08259">
    <property type="entry name" value="Periviscerokin"/>
    <property type="match status" value="1"/>
</dbReference>
<proteinExistence type="evidence at protein level"/>
<name>PVK2_CHRSW</name>
<protein>
    <recommendedName>
        <fullName evidence="5">Periviscerokinin-2</fullName>
    </recommendedName>
</protein>
<sequence>GASGLIAFPRV</sequence>